<name>ATPF_AKKM8</name>
<reference key="1">
    <citation type="journal article" date="2011" name="PLoS ONE">
        <title>The genome of Akkermansia muciniphila, a dedicated intestinal mucin degrader, and its use in exploring intestinal metagenomes.</title>
        <authorList>
            <person name="van Passel M.W."/>
            <person name="Kant R."/>
            <person name="Zoetendal E.G."/>
            <person name="Plugge C.M."/>
            <person name="Derrien M."/>
            <person name="Malfatti S.A."/>
            <person name="Chain P.S."/>
            <person name="Woyke T."/>
            <person name="Palva A."/>
            <person name="de Vos W.M."/>
            <person name="Smidt H."/>
        </authorList>
    </citation>
    <scope>NUCLEOTIDE SEQUENCE [LARGE SCALE GENOMIC DNA]</scope>
    <source>
        <strain>ATCC BAA-835 / DSM 22959 / JCM 33894 / BCRC 81048 / CCUG 64013 / CIP 107961 / Muc</strain>
    </source>
</reference>
<sequence length="175" mass="19962">MLNLIADQAWNPFAPFGVTSWEPFVANLIAFILMVVILRYLAFKPIQNVLEKRRQRIEEGEEMREESERQLASVKEQTHEMLVEAGEKGQEKIDAAKAAAARLLEEQEAEASRKAEEIIKKARQLAELEQQKEREALKEQFGQLVALAAAQVTGKMLTEEDQRRINREAIDSLDS</sequence>
<feature type="chain" id="PRO_0000368302" description="ATP synthase subunit b">
    <location>
        <begin position="1"/>
        <end position="175"/>
    </location>
</feature>
<feature type="transmembrane region" description="Helical" evidence="1">
    <location>
        <begin position="18"/>
        <end position="38"/>
    </location>
</feature>
<evidence type="ECO:0000255" key="1">
    <source>
        <dbReference type="HAMAP-Rule" id="MF_01398"/>
    </source>
</evidence>
<protein>
    <recommendedName>
        <fullName evidence="1">ATP synthase subunit b</fullName>
    </recommendedName>
    <alternativeName>
        <fullName evidence="1">ATP synthase F(0) sector subunit b</fullName>
    </alternativeName>
    <alternativeName>
        <fullName evidence="1">ATPase subunit I</fullName>
    </alternativeName>
    <alternativeName>
        <fullName evidence="1">F-type ATPase subunit b</fullName>
        <shortName evidence="1">F-ATPase subunit b</shortName>
    </alternativeName>
</protein>
<gene>
    <name evidence="1" type="primary">atpF</name>
    <name type="ordered locus">Amuc_0510</name>
</gene>
<dbReference type="EMBL" id="CP001071">
    <property type="protein sequence ID" value="ACD04348.1"/>
    <property type="molecule type" value="Genomic_DNA"/>
</dbReference>
<dbReference type="RefSeq" id="WP_012419563.1">
    <property type="nucleotide sequence ID" value="NZ_CP071807.1"/>
</dbReference>
<dbReference type="SMR" id="B2UNX8"/>
<dbReference type="STRING" id="349741.Amuc_0510"/>
<dbReference type="PaxDb" id="349741-Amuc_0510"/>
<dbReference type="KEGG" id="amu:Amuc_0510"/>
<dbReference type="eggNOG" id="COG0711">
    <property type="taxonomic scope" value="Bacteria"/>
</dbReference>
<dbReference type="HOGENOM" id="CLU_1529434_0_0_0"/>
<dbReference type="OrthoDB" id="193923at2"/>
<dbReference type="BioCyc" id="AMUC349741:G1GBX-559-MONOMER"/>
<dbReference type="Proteomes" id="UP000001031">
    <property type="component" value="Chromosome"/>
</dbReference>
<dbReference type="GO" id="GO:0005886">
    <property type="term" value="C:plasma membrane"/>
    <property type="evidence" value="ECO:0007669"/>
    <property type="project" value="UniProtKB-SubCell"/>
</dbReference>
<dbReference type="GO" id="GO:0045259">
    <property type="term" value="C:proton-transporting ATP synthase complex"/>
    <property type="evidence" value="ECO:0007669"/>
    <property type="project" value="UniProtKB-KW"/>
</dbReference>
<dbReference type="GO" id="GO:0046933">
    <property type="term" value="F:proton-transporting ATP synthase activity, rotational mechanism"/>
    <property type="evidence" value="ECO:0007669"/>
    <property type="project" value="UniProtKB-UniRule"/>
</dbReference>
<dbReference type="GO" id="GO:0046961">
    <property type="term" value="F:proton-transporting ATPase activity, rotational mechanism"/>
    <property type="evidence" value="ECO:0007669"/>
    <property type="project" value="TreeGrafter"/>
</dbReference>
<dbReference type="CDD" id="cd06503">
    <property type="entry name" value="ATP-synt_Fo_b"/>
    <property type="match status" value="1"/>
</dbReference>
<dbReference type="HAMAP" id="MF_01398">
    <property type="entry name" value="ATP_synth_b_bprime"/>
    <property type="match status" value="1"/>
</dbReference>
<dbReference type="InterPro" id="IPR002146">
    <property type="entry name" value="ATP_synth_b/b'su_bac/chlpt"/>
</dbReference>
<dbReference type="InterPro" id="IPR050059">
    <property type="entry name" value="ATP_synthase_B_chain"/>
</dbReference>
<dbReference type="PANTHER" id="PTHR33445:SF1">
    <property type="entry name" value="ATP SYNTHASE SUBUNIT B"/>
    <property type="match status" value="1"/>
</dbReference>
<dbReference type="PANTHER" id="PTHR33445">
    <property type="entry name" value="ATP SYNTHASE SUBUNIT B', CHLOROPLASTIC"/>
    <property type="match status" value="1"/>
</dbReference>
<dbReference type="Pfam" id="PF00430">
    <property type="entry name" value="ATP-synt_B"/>
    <property type="match status" value="1"/>
</dbReference>
<comment type="function">
    <text evidence="1">F(1)F(0) ATP synthase produces ATP from ADP in the presence of a proton or sodium gradient. F-type ATPases consist of two structural domains, F(1) containing the extramembraneous catalytic core and F(0) containing the membrane proton channel, linked together by a central stalk and a peripheral stalk. During catalysis, ATP synthesis in the catalytic domain of F(1) is coupled via a rotary mechanism of the central stalk subunits to proton translocation.</text>
</comment>
<comment type="function">
    <text evidence="1">Component of the F(0) channel, it forms part of the peripheral stalk, linking F(1) to F(0).</text>
</comment>
<comment type="subunit">
    <text evidence="1">F-type ATPases have 2 components, F(1) - the catalytic core - and F(0) - the membrane proton channel. F(1) has five subunits: alpha(3), beta(3), gamma(1), delta(1), epsilon(1). F(0) has three main subunits: a(1), b(2) and c(10-14). The alpha and beta chains form an alternating ring which encloses part of the gamma chain. F(1) is attached to F(0) by a central stalk formed by the gamma and epsilon chains, while a peripheral stalk is formed by the delta and b chains.</text>
</comment>
<comment type="subcellular location">
    <subcellularLocation>
        <location evidence="1">Cell inner membrane</location>
        <topology evidence="1">Single-pass membrane protein</topology>
    </subcellularLocation>
</comment>
<comment type="similarity">
    <text evidence="1">Belongs to the ATPase B chain family.</text>
</comment>
<organism>
    <name type="scientific">Akkermansia muciniphila (strain ATCC BAA-835 / DSM 22959 / JCM 33894 / BCRC 81048 / CCUG 64013 / CIP 107961 / Muc)</name>
    <dbReference type="NCBI Taxonomy" id="349741"/>
    <lineage>
        <taxon>Bacteria</taxon>
        <taxon>Pseudomonadati</taxon>
        <taxon>Verrucomicrobiota</taxon>
        <taxon>Verrucomicrobiia</taxon>
        <taxon>Verrucomicrobiales</taxon>
        <taxon>Akkermansiaceae</taxon>
        <taxon>Akkermansia</taxon>
    </lineage>
</organism>
<accession>B2UNX8</accession>
<keyword id="KW-0066">ATP synthesis</keyword>
<keyword id="KW-0997">Cell inner membrane</keyword>
<keyword id="KW-1003">Cell membrane</keyword>
<keyword id="KW-0138">CF(0)</keyword>
<keyword id="KW-0375">Hydrogen ion transport</keyword>
<keyword id="KW-0406">Ion transport</keyword>
<keyword id="KW-0472">Membrane</keyword>
<keyword id="KW-1185">Reference proteome</keyword>
<keyword id="KW-0812">Transmembrane</keyword>
<keyword id="KW-1133">Transmembrane helix</keyword>
<keyword id="KW-0813">Transport</keyword>
<proteinExistence type="inferred from homology"/>